<reference key="1">
    <citation type="journal article" date="1995" name="Eur. J. Biochem.">
        <title>Purification of crotonyl-CoA reductase from Streptomyces collinus and cloning, sequencing and expression of the corresponding gene in Escherichia coli.</title>
        <authorList>
            <person name="Wallace K.K."/>
            <person name="Bao Z.Y."/>
            <person name="Dai H."/>
            <person name="Digate R."/>
            <person name="Schuler G."/>
            <person name="Speedie M.K."/>
            <person name="Reynolds K.A."/>
        </authorList>
    </citation>
    <scope>NUCLEOTIDE SEQUENCE [GENOMIC DNA]</scope>
    <scope>FUNCTION AS A CROTONYL-COA REDUCTASE</scope>
    <scope>CATALYTIC ACTIVITY</scope>
    <scope>BIOPHYSICOCHEMICAL PROPERTIES</scope>
    <scope>ACTIVITY REGULATION</scope>
    <scope>SUBSTRATE SPECIFICITY</scope>
    <scope>SUBUNIT</scope>
    <source>
        <strain>Tu 1892</strain>
    </source>
</reference>
<reference key="2">
    <citation type="submission" date="2009-06" db="PDB data bank">
        <title>Structure of Streptomycs collinus crotonyl COA carboxylase/reductase.</title>
        <authorList>
            <person name="Scarsdale J.N."/>
            <person name="Musayev F.N."/>
            <person name="Hazzard C."/>
            <person name="Florova G."/>
            <person name="Reynolds K."/>
            <person name="Wright H.T."/>
        </authorList>
    </citation>
    <scope>X-RAY CRYSTALLOGRAPHY (2.40 ANGSTROMS)</scope>
    <scope>SUBUNIT</scope>
</reference>
<evidence type="ECO:0000269" key="1">
    <source>
    </source>
</evidence>
<evidence type="ECO:0000269" key="2">
    <source ref="2"/>
</evidence>
<evidence type="ECO:0000305" key="3"/>
<evidence type="ECO:0007829" key="4">
    <source>
        <dbReference type="PDB" id="3HZZ"/>
    </source>
</evidence>
<accession>Q53865</accession>
<sequence length="447" mass="49364">MTVKDILDAIQSKDATSADFAALQLPESYRAITVHKDETEMFAGLETRDKDPRKSIHLDEVPVPELGPGEALVAVMASSVNYNSVWTSIFEPVSTFAFLERYGKLSPLTKRHDLPYHIIGSDLAGVVLRTGPGVNAWQPGDEVVAHCLSVELESPDGHDDTMLDPEQRIWGFETNFGGLAEIALVKTNQLMPKPKHLTWEEAAAPGLVNSTAYRQLVSRNGAAMKQGDNVLIWGASGGLGSYATQFALAGGANPICVVSSPQKAEICRSMGAEAIIDRNAEGYKFWKDEHTQDPKEWKRFGKRIRELTGGEDIDIVFEHPGRETFGASVYVTRKGGTITTCASTSGYMHEYDNRYLWMSLKRIIGSHFANYREAYEANRLIAKGKIHPTLSKTYSLEETGQAAYDVHRNLHQGKVGVLCLAPEEGLGVRDAEMRAQHIDAINRFRNV</sequence>
<feature type="chain" id="PRO_0000418532" description="Crotonyl-CoA reductase">
    <location>
        <begin position="1"/>
        <end position="447"/>
    </location>
</feature>
<feature type="helix" evidence="4">
    <location>
        <begin position="3"/>
        <end position="11"/>
    </location>
</feature>
<feature type="helix" evidence="4">
    <location>
        <begin position="17"/>
        <end position="21"/>
    </location>
</feature>
<feature type="strand" evidence="4">
    <location>
        <begin position="27"/>
        <end position="35"/>
    </location>
</feature>
<feature type="helix" evidence="4">
    <location>
        <begin position="36"/>
        <end position="38"/>
    </location>
</feature>
<feature type="turn" evidence="4">
    <location>
        <begin position="39"/>
        <end position="44"/>
    </location>
</feature>
<feature type="helix" evidence="4">
    <location>
        <begin position="47"/>
        <end position="49"/>
    </location>
</feature>
<feature type="helix" evidence="4">
    <location>
        <begin position="52"/>
        <end position="55"/>
    </location>
</feature>
<feature type="strand" evidence="4">
    <location>
        <begin position="57"/>
        <end position="62"/>
    </location>
</feature>
<feature type="strand" evidence="4">
    <location>
        <begin position="70"/>
        <end position="80"/>
    </location>
</feature>
<feature type="helix" evidence="4">
    <location>
        <begin position="82"/>
        <end position="89"/>
    </location>
</feature>
<feature type="helix" evidence="4">
    <location>
        <begin position="96"/>
        <end position="102"/>
    </location>
</feature>
<feature type="helix" evidence="4">
    <location>
        <begin position="107"/>
        <end position="110"/>
    </location>
</feature>
<feature type="strand" evidence="4">
    <location>
        <begin position="115"/>
        <end position="118"/>
    </location>
</feature>
<feature type="strand" evidence="4">
    <location>
        <begin position="124"/>
        <end position="130"/>
    </location>
</feature>
<feature type="strand" evidence="4">
    <location>
        <begin position="142"/>
        <end position="145"/>
    </location>
</feature>
<feature type="helix" evidence="4">
    <location>
        <begin position="155"/>
        <end position="157"/>
    </location>
</feature>
<feature type="helix" evidence="4">
    <location>
        <begin position="161"/>
        <end position="163"/>
    </location>
</feature>
<feature type="turn" evidence="4">
    <location>
        <begin position="170"/>
        <end position="172"/>
    </location>
</feature>
<feature type="strand" evidence="4">
    <location>
        <begin position="173"/>
        <end position="176"/>
    </location>
</feature>
<feature type="strand" evidence="4">
    <location>
        <begin position="178"/>
        <end position="186"/>
    </location>
</feature>
<feature type="helix" evidence="4">
    <location>
        <begin position="187"/>
        <end position="189"/>
    </location>
</feature>
<feature type="strand" evidence="4">
    <location>
        <begin position="190"/>
        <end position="192"/>
    </location>
</feature>
<feature type="helix" evidence="4">
    <location>
        <begin position="199"/>
        <end position="203"/>
    </location>
</feature>
<feature type="helix" evidence="4">
    <location>
        <begin position="206"/>
        <end position="216"/>
    </location>
</feature>
<feature type="turn" evidence="4">
    <location>
        <begin position="219"/>
        <end position="222"/>
    </location>
</feature>
<feature type="strand" evidence="4">
    <location>
        <begin position="229"/>
        <end position="232"/>
    </location>
</feature>
<feature type="turn" evidence="4">
    <location>
        <begin position="233"/>
        <end position="236"/>
    </location>
</feature>
<feature type="helix" evidence="4">
    <location>
        <begin position="238"/>
        <end position="249"/>
    </location>
</feature>
<feature type="strand" evidence="4">
    <location>
        <begin position="253"/>
        <end position="260"/>
    </location>
</feature>
<feature type="helix" evidence="4">
    <location>
        <begin position="261"/>
        <end position="269"/>
    </location>
</feature>
<feature type="strand" evidence="4">
    <location>
        <begin position="274"/>
        <end position="277"/>
    </location>
</feature>
<feature type="turn" evidence="4">
    <location>
        <begin position="278"/>
        <end position="282"/>
    </location>
</feature>
<feature type="strand" evidence="4">
    <location>
        <begin position="285"/>
        <end position="290"/>
    </location>
</feature>
<feature type="helix" evidence="4">
    <location>
        <begin position="294"/>
        <end position="308"/>
    </location>
</feature>
<feature type="strand" evidence="4">
    <location>
        <begin position="313"/>
        <end position="318"/>
    </location>
</feature>
<feature type="helix" evidence="4">
    <location>
        <begin position="322"/>
        <end position="331"/>
    </location>
</feature>
<feature type="strand" evidence="4">
    <location>
        <begin position="332"/>
        <end position="341"/>
    </location>
</feature>
<feature type="strand" evidence="4">
    <location>
        <begin position="346"/>
        <end position="352"/>
    </location>
</feature>
<feature type="helix" evidence="4">
    <location>
        <begin position="353"/>
        <end position="357"/>
    </location>
</feature>
<feature type="turn" evidence="4">
    <location>
        <begin position="358"/>
        <end position="360"/>
    </location>
</feature>
<feature type="strand" evidence="4">
    <location>
        <begin position="362"/>
        <end position="365"/>
    </location>
</feature>
<feature type="helix" evidence="4">
    <location>
        <begin position="371"/>
        <end position="382"/>
    </location>
</feature>
<feature type="strand" evidence="4">
    <location>
        <begin position="390"/>
        <end position="395"/>
    </location>
</feature>
<feature type="helix" evidence="4">
    <location>
        <begin position="396"/>
        <end position="398"/>
    </location>
</feature>
<feature type="helix" evidence="4">
    <location>
        <begin position="399"/>
        <end position="407"/>
    </location>
</feature>
<feature type="strand" evidence="4">
    <location>
        <begin position="412"/>
        <end position="420"/>
    </location>
</feature>
<feature type="strand" evidence="4">
    <location>
        <begin position="422"/>
        <end position="425"/>
    </location>
</feature>
<feature type="helix" evidence="4">
    <location>
        <begin position="431"/>
        <end position="441"/>
    </location>
</feature>
<feature type="helix" evidence="4">
    <location>
        <begin position="442"/>
        <end position="444"/>
    </location>
</feature>
<organism>
    <name type="scientific">Streptomyces collinus</name>
    <dbReference type="NCBI Taxonomy" id="42684"/>
    <lineage>
        <taxon>Bacteria</taxon>
        <taxon>Bacillati</taxon>
        <taxon>Actinomycetota</taxon>
        <taxon>Actinomycetes</taxon>
        <taxon>Kitasatosporales</taxon>
        <taxon>Streptomycetaceae</taxon>
        <taxon>Streptomyces</taxon>
    </lineage>
</organism>
<protein>
    <recommendedName>
        <fullName>Crotonyl-CoA reductase</fullName>
        <ecNumber>1.3.1.86</ecNumber>
    </recommendedName>
</protein>
<proteinExistence type="evidence at protein level"/>
<name>CCR_STRCU</name>
<comment type="function">
    <text evidence="1">May play a role in supplying butyryl-CoA for straight-chain fatty acid biosynthesis. Catalyzes the conversion of crotonyl-CoA to butyryl-CoA. It shows a high substrate specificity for crotonyl-CoA, a short-chain-length (C4), but no measurable activity is observed with shorter (C3) or longer-chain-length enoyl-CoA thioesters.</text>
</comment>
<comment type="catalytic activity">
    <reaction evidence="1">
        <text>butanoyl-CoA + NADP(+) = (2E)-butenoyl-CoA + NADPH + H(+)</text>
        <dbReference type="Rhea" id="RHEA:27906"/>
        <dbReference type="ChEBI" id="CHEBI:15378"/>
        <dbReference type="ChEBI" id="CHEBI:57332"/>
        <dbReference type="ChEBI" id="CHEBI:57371"/>
        <dbReference type="ChEBI" id="CHEBI:57783"/>
        <dbReference type="ChEBI" id="CHEBI:58349"/>
        <dbReference type="EC" id="1.3.1.86"/>
    </reaction>
</comment>
<comment type="activity regulation">
    <text evidence="1">Inhibited by divalent cations (30-100%), beta-chloromercuribenzoate (85%), iodoacetamide (40%) and N-ethylmaleamide (80%). The presence of CoA thioesters containing 12-20 carbon atoms results in inhibition of enzyme activity. The greatest degree of inhibition is observed in the presence of palmitoyl-CoA and myristoyl-CoA. The branched-chain fatty acids, isopalmitoyl-CoA and isomyristoyl-CoA are less effective inhibitors of the crotonyl-CoA reductase. Concentrations of NADPH above 200 uM lead to inhibition of enzyme activity.</text>
</comment>
<comment type="biophysicochemical properties">
    <kinetics>
        <KM evidence="1">18 uM for crotonyl-CoA (with NADP at pH 7.5)</KM>
    </kinetics>
    <phDependence>
        <text evidence="1">Optimum pH is 6.5.</text>
    </phDependence>
    <temperatureDependence>
        <text evidence="1">Optimum temperature is 40 degrees Celsius.</text>
    </temperatureDependence>
</comment>
<comment type="subunit">
    <text evidence="1 2">Homodimer.</text>
</comment>
<comment type="similarity">
    <text evidence="3">Belongs to the zinc-containing alcohol dehydrogenase family. Crotonyl-CoA carboxylase/reductase subfamily.</text>
</comment>
<gene>
    <name type="primary">ccr</name>
</gene>
<keyword id="KW-0002">3D-structure</keyword>
<keyword id="KW-0479">Metal-binding</keyword>
<keyword id="KW-0521">NADP</keyword>
<keyword id="KW-0560">Oxidoreductase</keyword>
<keyword id="KW-0862">Zinc</keyword>
<dbReference type="EC" id="1.3.1.86"/>
<dbReference type="EMBL" id="U37135">
    <property type="protein sequence ID" value="AAA92890.1"/>
    <property type="molecule type" value="Genomic_DNA"/>
</dbReference>
<dbReference type="PIR" id="S72400">
    <property type="entry name" value="S72400"/>
</dbReference>
<dbReference type="PDB" id="3HZZ">
    <property type="method" value="X-ray"/>
    <property type="resolution" value="2.40 A"/>
    <property type="chains" value="A/B/C/D=1-447"/>
</dbReference>
<dbReference type="PDBsum" id="3HZZ"/>
<dbReference type="SMR" id="Q53865"/>
<dbReference type="KEGG" id="ag:AAA92890"/>
<dbReference type="EvolutionaryTrace" id="Q53865"/>
<dbReference type="GO" id="GO:0043880">
    <property type="term" value="F:crotonyl-CoA reductase activity"/>
    <property type="evidence" value="ECO:0000314"/>
    <property type="project" value="UniProtKB"/>
</dbReference>
<dbReference type="GO" id="GO:0046872">
    <property type="term" value="F:metal ion binding"/>
    <property type="evidence" value="ECO:0007669"/>
    <property type="project" value="UniProtKB-KW"/>
</dbReference>
<dbReference type="GO" id="GO:0050661">
    <property type="term" value="F:NADP binding"/>
    <property type="evidence" value="ECO:0000314"/>
    <property type="project" value="UniProtKB"/>
</dbReference>
<dbReference type="CDD" id="cd08246">
    <property type="entry name" value="crotonyl_coA_red"/>
    <property type="match status" value="1"/>
</dbReference>
<dbReference type="FunFam" id="3.90.180.10:FF:000011">
    <property type="entry name" value="Crotonyl-CoA carboxylase/reductase"/>
    <property type="match status" value="1"/>
</dbReference>
<dbReference type="FunFam" id="3.90.180.10:FF:000020">
    <property type="entry name" value="Crotonyl-CoA reductase"/>
    <property type="match status" value="1"/>
</dbReference>
<dbReference type="Gene3D" id="3.90.180.10">
    <property type="entry name" value="Medium-chain alcohol dehydrogenases, catalytic domain"/>
    <property type="match status" value="2"/>
</dbReference>
<dbReference type="InterPro" id="IPR013149">
    <property type="entry name" value="ADH-like_C"/>
</dbReference>
<dbReference type="InterPro" id="IPR013154">
    <property type="entry name" value="ADH-like_N"/>
</dbReference>
<dbReference type="InterPro" id="IPR010085">
    <property type="entry name" value="Crot_CoA_red"/>
</dbReference>
<dbReference type="InterPro" id="IPR011032">
    <property type="entry name" value="GroES-like_sf"/>
</dbReference>
<dbReference type="InterPro" id="IPR036291">
    <property type="entry name" value="NAD(P)-bd_dom_sf"/>
</dbReference>
<dbReference type="InterPro" id="IPR020843">
    <property type="entry name" value="PKS_ER"/>
</dbReference>
<dbReference type="InterPro" id="IPR051603">
    <property type="entry name" value="Zinc-ADH_QOR/CCCR"/>
</dbReference>
<dbReference type="NCBIfam" id="TIGR01751">
    <property type="entry name" value="crot-CoA-red"/>
    <property type="match status" value="1"/>
</dbReference>
<dbReference type="PANTHER" id="PTHR44154">
    <property type="entry name" value="QUINONE OXIDOREDUCTASE"/>
    <property type="match status" value="1"/>
</dbReference>
<dbReference type="PANTHER" id="PTHR44154:SF1">
    <property type="entry name" value="QUINONE OXIDOREDUCTASE"/>
    <property type="match status" value="1"/>
</dbReference>
<dbReference type="Pfam" id="PF08240">
    <property type="entry name" value="ADH_N"/>
    <property type="match status" value="1"/>
</dbReference>
<dbReference type="Pfam" id="PF00107">
    <property type="entry name" value="ADH_zinc_N"/>
    <property type="match status" value="1"/>
</dbReference>
<dbReference type="SMART" id="SM00829">
    <property type="entry name" value="PKS_ER"/>
    <property type="match status" value="1"/>
</dbReference>
<dbReference type="SUPFAM" id="SSF50129">
    <property type="entry name" value="GroES-like"/>
    <property type="match status" value="1"/>
</dbReference>
<dbReference type="SUPFAM" id="SSF51735">
    <property type="entry name" value="NAD(P)-binding Rossmann-fold domains"/>
    <property type="match status" value="1"/>
</dbReference>